<sequence>MTVRVAINGFGRIGRNVVRALYESGRRAEITVVAINELADAAGMAHLLKYDTSHGRFAWEVRQERDQLFVGDDAIRVLHERSLQSLPWRELGVDVVLDCTGVYGSREHGEAHIAAGAKKVLFSHPGSNDLDATVVYGVNQDQLRAEHRIVSNASCTTNCIIPVIKLLDDAYGIESGTVTTIHSAMHDQQVIDAYHPDLRRTRAASQSIIPVDTKLAAGITRFFPQFNDRFEAIAVRVPTINVTAIDLSVTVKKPVKANEVNLLLQKAAQGAFHGIVDYTELPLVSVDFNHDPHSAIVDGTQTRVSGAHLIKTLVWCDNEWGFANRMLDTTLAMATVAFR</sequence>
<evidence type="ECO:0000255" key="1">
    <source>
        <dbReference type="HAMAP-Rule" id="MF_01640"/>
    </source>
</evidence>
<reference key="1">
    <citation type="journal article" date="2011" name="Proc. Natl. Acad. Sci. U.S.A.">
        <title>Genomic anatomy of Escherichia coli O157:H7 outbreaks.</title>
        <authorList>
            <person name="Eppinger M."/>
            <person name="Mammel M.K."/>
            <person name="Leclerc J.E."/>
            <person name="Ravel J."/>
            <person name="Cebula T.A."/>
        </authorList>
    </citation>
    <scope>NUCLEOTIDE SEQUENCE [LARGE SCALE GENOMIC DNA]</scope>
    <source>
        <strain>EC4115 / EHEC</strain>
    </source>
</reference>
<dbReference type="EC" id="1.2.1.72" evidence="1"/>
<dbReference type="EMBL" id="CP001164">
    <property type="protein sequence ID" value="ACI35157.1"/>
    <property type="molecule type" value="Genomic_DNA"/>
</dbReference>
<dbReference type="RefSeq" id="WP_000218480.1">
    <property type="nucleotide sequence ID" value="NC_011353.1"/>
</dbReference>
<dbReference type="SMR" id="B5YQB9"/>
<dbReference type="GeneID" id="93779071"/>
<dbReference type="KEGG" id="ecf:ECH74115_4224"/>
<dbReference type="HOGENOM" id="CLU_030140_0_2_6"/>
<dbReference type="UniPathway" id="UPA00244">
    <property type="reaction ID" value="UER00309"/>
</dbReference>
<dbReference type="GO" id="GO:0005737">
    <property type="term" value="C:cytoplasm"/>
    <property type="evidence" value="ECO:0007669"/>
    <property type="project" value="UniProtKB-SubCell"/>
</dbReference>
<dbReference type="GO" id="GO:0048001">
    <property type="term" value="F:erythrose-4-phosphate dehydrogenase activity"/>
    <property type="evidence" value="ECO:0007669"/>
    <property type="project" value="UniProtKB-UniRule"/>
</dbReference>
<dbReference type="GO" id="GO:0051287">
    <property type="term" value="F:NAD binding"/>
    <property type="evidence" value="ECO:0007669"/>
    <property type="project" value="InterPro"/>
</dbReference>
<dbReference type="GO" id="GO:0042823">
    <property type="term" value="P:pyridoxal phosphate biosynthetic process"/>
    <property type="evidence" value="ECO:0007669"/>
    <property type="project" value="UniProtKB-UniRule"/>
</dbReference>
<dbReference type="GO" id="GO:0008615">
    <property type="term" value="P:pyridoxine biosynthetic process"/>
    <property type="evidence" value="ECO:0007669"/>
    <property type="project" value="UniProtKB-UniRule"/>
</dbReference>
<dbReference type="CDD" id="cd23937">
    <property type="entry name" value="GAPDH_C_E4PDH"/>
    <property type="match status" value="1"/>
</dbReference>
<dbReference type="CDD" id="cd17892">
    <property type="entry name" value="GAPDH_N_E4PDH"/>
    <property type="match status" value="1"/>
</dbReference>
<dbReference type="FunFam" id="3.30.360.10:FF:000007">
    <property type="entry name" value="D-erythrose-4-phosphate dehydrogenase"/>
    <property type="match status" value="1"/>
</dbReference>
<dbReference type="FunFam" id="3.40.50.720:FF:000001">
    <property type="entry name" value="Glyceraldehyde-3-phosphate dehydrogenase"/>
    <property type="match status" value="1"/>
</dbReference>
<dbReference type="Gene3D" id="3.30.360.10">
    <property type="entry name" value="Dihydrodipicolinate Reductase, domain 2"/>
    <property type="match status" value="1"/>
</dbReference>
<dbReference type="Gene3D" id="3.40.50.720">
    <property type="entry name" value="NAD(P)-binding Rossmann-like Domain"/>
    <property type="match status" value="1"/>
</dbReference>
<dbReference type="HAMAP" id="MF_01640">
    <property type="entry name" value="E4P_dehydrog"/>
    <property type="match status" value="1"/>
</dbReference>
<dbReference type="InterPro" id="IPR006422">
    <property type="entry name" value="E4P_DH_bac"/>
</dbReference>
<dbReference type="InterPro" id="IPR020831">
    <property type="entry name" value="GlycerAld/Erythrose_P_DH"/>
</dbReference>
<dbReference type="InterPro" id="IPR020830">
    <property type="entry name" value="GlycerAld_3-P_DH_AS"/>
</dbReference>
<dbReference type="InterPro" id="IPR020829">
    <property type="entry name" value="GlycerAld_3-P_DH_cat"/>
</dbReference>
<dbReference type="InterPro" id="IPR020828">
    <property type="entry name" value="GlycerAld_3-P_DH_NAD(P)-bd"/>
</dbReference>
<dbReference type="InterPro" id="IPR036291">
    <property type="entry name" value="NAD(P)-bd_dom_sf"/>
</dbReference>
<dbReference type="NCBIfam" id="TIGR01532">
    <property type="entry name" value="E4PD_g-proteo"/>
    <property type="match status" value="1"/>
</dbReference>
<dbReference type="NCBIfam" id="NF010058">
    <property type="entry name" value="PRK13535.1"/>
    <property type="match status" value="1"/>
</dbReference>
<dbReference type="PANTHER" id="PTHR43148">
    <property type="entry name" value="GLYCERALDEHYDE-3-PHOSPHATE DEHYDROGENASE 2"/>
    <property type="match status" value="1"/>
</dbReference>
<dbReference type="Pfam" id="PF02800">
    <property type="entry name" value="Gp_dh_C"/>
    <property type="match status" value="1"/>
</dbReference>
<dbReference type="Pfam" id="PF00044">
    <property type="entry name" value="Gp_dh_N"/>
    <property type="match status" value="1"/>
</dbReference>
<dbReference type="PIRSF" id="PIRSF000149">
    <property type="entry name" value="GAP_DH"/>
    <property type="match status" value="1"/>
</dbReference>
<dbReference type="PRINTS" id="PR00078">
    <property type="entry name" value="G3PDHDRGNASE"/>
</dbReference>
<dbReference type="SMART" id="SM00846">
    <property type="entry name" value="Gp_dh_N"/>
    <property type="match status" value="1"/>
</dbReference>
<dbReference type="SUPFAM" id="SSF55347">
    <property type="entry name" value="Glyceraldehyde-3-phosphate dehydrogenase-like, C-terminal domain"/>
    <property type="match status" value="1"/>
</dbReference>
<dbReference type="SUPFAM" id="SSF51735">
    <property type="entry name" value="NAD(P)-binding Rossmann-fold domains"/>
    <property type="match status" value="1"/>
</dbReference>
<dbReference type="PROSITE" id="PS00071">
    <property type="entry name" value="GAPDH"/>
    <property type="match status" value="1"/>
</dbReference>
<comment type="function">
    <text evidence="1">Catalyzes the NAD-dependent conversion of D-erythrose 4-phosphate to 4-phosphoerythronate.</text>
</comment>
<comment type="catalytic activity">
    <reaction evidence="1">
        <text>D-erythrose 4-phosphate + NAD(+) + H2O = 4-phospho-D-erythronate + NADH + 2 H(+)</text>
        <dbReference type="Rhea" id="RHEA:12056"/>
        <dbReference type="ChEBI" id="CHEBI:15377"/>
        <dbReference type="ChEBI" id="CHEBI:15378"/>
        <dbReference type="ChEBI" id="CHEBI:16897"/>
        <dbReference type="ChEBI" id="CHEBI:57540"/>
        <dbReference type="ChEBI" id="CHEBI:57945"/>
        <dbReference type="ChEBI" id="CHEBI:58766"/>
        <dbReference type="EC" id="1.2.1.72"/>
    </reaction>
</comment>
<comment type="pathway">
    <text evidence="1">Cofactor biosynthesis; pyridoxine 5'-phosphate biosynthesis; pyridoxine 5'-phosphate from D-erythrose 4-phosphate: step 1/5.</text>
</comment>
<comment type="subunit">
    <text evidence="1">Homotetramer.</text>
</comment>
<comment type="subcellular location">
    <subcellularLocation>
        <location evidence="1">Cytoplasm</location>
    </subcellularLocation>
</comment>
<comment type="similarity">
    <text evidence="1">Belongs to the glyceraldehyde-3-phosphate dehydrogenase family. Epd subfamily.</text>
</comment>
<gene>
    <name evidence="1" type="primary">epd</name>
    <name type="ordered locus">ECH74115_4224</name>
</gene>
<keyword id="KW-0963">Cytoplasm</keyword>
<keyword id="KW-0520">NAD</keyword>
<keyword id="KW-0560">Oxidoreductase</keyword>
<keyword id="KW-0664">Pyridoxine biosynthesis</keyword>
<feature type="chain" id="PRO_1000186820" description="D-erythrose-4-phosphate dehydrogenase">
    <location>
        <begin position="1"/>
        <end position="339"/>
    </location>
</feature>
<feature type="active site" description="Nucleophile" evidence="1">
    <location>
        <position position="155"/>
    </location>
</feature>
<feature type="binding site" evidence="1">
    <location>
        <begin position="12"/>
        <end position="13"/>
    </location>
    <ligand>
        <name>NAD(+)</name>
        <dbReference type="ChEBI" id="CHEBI:57540"/>
    </ligand>
</feature>
<feature type="binding site" evidence="1">
    <location>
        <position position="81"/>
    </location>
    <ligand>
        <name>NAD(+)</name>
        <dbReference type="ChEBI" id="CHEBI:57540"/>
    </ligand>
</feature>
<feature type="binding site" evidence="1">
    <location>
        <begin position="154"/>
        <end position="156"/>
    </location>
    <ligand>
        <name>substrate</name>
    </ligand>
</feature>
<feature type="binding site" evidence="1">
    <location>
        <position position="200"/>
    </location>
    <ligand>
        <name>substrate</name>
    </ligand>
</feature>
<feature type="binding site" evidence="1">
    <location>
        <begin position="213"/>
        <end position="214"/>
    </location>
    <ligand>
        <name>substrate</name>
    </ligand>
</feature>
<feature type="binding site" evidence="1">
    <location>
        <position position="236"/>
    </location>
    <ligand>
        <name>substrate</name>
    </ligand>
</feature>
<feature type="binding site" evidence="1">
    <location>
        <position position="318"/>
    </location>
    <ligand>
        <name>NAD(+)</name>
        <dbReference type="ChEBI" id="CHEBI:57540"/>
    </ligand>
</feature>
<feature type="site" description="Activates thiol group during catalysis" evidence="1">
    <location>
        <position position="182"/>
    </location>
</feature>
<protein>
    <recommendedName>
        <fullName evidence="1">D-erythrose-4-phosphate dehydrogenase</fullName>
        <shortName evidence="1">E4PDH</shortName>
        <ecNumber evidence="1">1.2.1.72</ecNumber>
    </recommendedName>
</protein>
<accession>B5YQB9</accession>
<organism>
    <name type="scientific">Escherichia coli O157:H7 (strain EC4115 / EHEC)</name>
    <dbReference type="NCBI Taxonomy" id="444450"/>
    <lineage>
        <taxon>Bacteria</taxon>
        <taxon>Pseudomonadati</taxon>
        <taxon>Pseudomonadota</taxon>
        <taxon>Gammaproteobacteria</taxon>
        <taxon>Enterobacterales</taxon>
        <taxon>Enterobacteriaceae</taxon>
        <taxon>Escherichia</taxon>
    </lineage>
</organism>
<proteinExistence type="inferred from homology"/>
<name>E4PD_ECO5E</name>